<reference key="1">
    <citation type="journal article" date="2000" name="Transplantation">
        <title>Molecular cloning and characterization of the pig homologue to human CD29, the integrin beta1 subunit.</title>
        <authorList>
            <person name="Jimenez-Marin A."/>
            <person name="Garrido J.J."/>
            <person name="de Andres-Cara D.F."/>
            <person name="Morera L."/>
            <person name="Barbancho M.J."/>
            <person name="Llanes D."/>
        </authorList>
    </citation>
    <scope>NUCLEOTIDE SEQUENCE [MRNA]</scope>
    <scope>TISSUE SPECIFICITY</scope>
</reference>
<name>ITB1_PIG</name>
<dbReference type="EMBL" id="AF192528">
    <property type="protein sequence ID" value="AAG16767.1"/>
    <property type="molecule type" value="mRNA"/>
</dbReference>
<dbReference type="RefSeq" id="NP_999133.1">
    <property type="nucleotide sequence ID" value="NM_213968.1"/>
</dbReference>
<dbReference type="SMR" id="Q9GLP0"/>
<dbReference type="FunCoup" id="Q9GLP0">
    <property type="interactions" value="1385"/>
</dbReference>
<dbReference type="STRING" id="9823.ENSSSCP00000030775"/>
<dbReference type="GlyCosmos" id="Q9GLP0">
    <property type="glycosylation" value="12 sites, No reported glycans"/>
</dbReference>
<dbReference type="GlyGen" id="Q9GLP0">
    <property type="glycosylation" value="13 sites"/>
</dbReference>
<dbReference type="PaxDb" id="9823-ENSSSCP00000011838"/>
<dbReference type="PeptideAtlas" id="Q9GLP0"/>
<dbReference type="GeneID" id="397019"/>
<dbReference type="KEGG" id="ssc:397019"/>
<dbReference type="CTD" id="3688"/>
<dbReference type="eggNOG" id="KOG1226">
    <property type="taxonomic scope" value="Eukaryota"/>
</dbReference>
<dbReference type="InParanoid" id="Q9GLP0"/>
<dbReference type="OrthoDB" id="410592at2759"/>
<dbReference type="Proteomes" id="UP000008227">
    <property type="component" value="Unplaced"/>
</dbReference>
<dbReference type="Proteomes" id="UP000314985">
    <property type="component" value="Unplaced"/>
</dbReference>
<dbReference type="Proteomes" id="UP000694570">
    <property type="component" value="Unplaced"/>
</dbReference>
<dbReference type="Proteomes" id="UP000694571">
    <property type="component" value="Unplaced"/>
</dbReference>
<dbReference type="Proteomes" id="UP000694720">
    <property type="component" value="Unplaced"/>
</dbReference>
<dbReference type="Proteomes" id="UP000694722">
    <property type="component" value="Unplaced"/>
</dbReference>
<dbReference type="Proteomes" id="UP000694723">
    <property type="component" value="Unplaced"/>
</dbReference>
<dbReference type="Proteomes" id="UP000694724">
    <property type="component" value="Unplaced"/>
</dbReference>
<dbReference type="Proteomes" id="UP000694725">
    <property type="component" value="Unplaced"/>
</dbReference>
<dbReference type="Proteomes" id="UP000694726">
    <property type="component" value="Unplaced"/>
</dbReference>
<dbReference type="Proteomes" id="UP000694727">
    <property type="component" value="Unplaced"/>
</dbReference>
<dbReference type="Proteomes" id="UP000694728">
    <property type="component" value="Unplaced"/>
</dbReference>
<dbReference type="GO" id="GO:0009986">
    <property type="term" value="C:cell surface"/>
    <property type="evidence" value="ECO:0000250"/>
    <property type="project" value="UniProtKB"/>
</dbReference>
<dbReference type="GO" id="GO:0005925">
    <property type="term" value="C:focal adhesion"/>
    <property type="evidence" value="ECO:0000250"/>
    <property type="project" value="UniProtKB"/>
</dbReference>
<dbReference type="GO" id="GO:0034679">
    <property type="term" value="C:integrin alpha9-beta1 complex"/>
    <property type="evidence" value="ECO:0000250"/>
    <property type="project" value="UniProtKB"/>
</dbReference>
<dbReference type="GO" id="GO:0008305">
    <property type="term" value="C:integrin complex"/>
    <property type="evidence" value="ECO:0000318"/>
    <property type="project" value="GO_Central"/>
</dbReference>
<dbReference type="GO" id="GO:0030027">
    <property type="term" value="C:lamellipodium"/>
    <property type="evidence" value="ECO:0007669"/>
    <property type="project" value="UniProtKB-SubCell"/>
</dbReference>
<dbReference type="GO" id="GO:0042470">
    <property type="term" value="C:melanosome"/>
    <property type="evidence" value="ECO:0007669"/>
    <property type="project" value="UniProtKB-SubCell"/>
</dbReference>
<dbReference type="GO" id="GO:0016020">
    <property type="term" value="C:membrane"/>
    <property type="evidence" value="ECO:0000250"/>
    <property type="project" value="UniProtKB"/>
</dbReference>
<dbReference type="GO" id="GO:0055037">
    <property type="term" value="C:recycling endosome"/>
    <property type="evidence" value="ECO:0007669"/>
    <property type="project" value="UniProtKB-SubCell"/>
</dbReference>
<dbReference type="GO" id="GO:0032587">
    <property type="term" value="C:ruffle membrane"/>
    <property type="evidence" value="ECO:0007669"/>
    <property type="project" value="UniProtKB-SubCell"/>
</dbReference>
<dbReference type="GO" id="GO:0045202">
    <property type="term" value="C:synapse"/>
    <property type="evidence" value="ECO:0000318"/>
    <property type="project" value="GO_Central"/>
</dbReference>
<dbReference type="GO" id="GO:0098639">
    <property type="term" value="F:collagen binding involved in cell-matrix adhesion"/>
    <property type="evidence" value="ECO:0000318"/>
    <property type="project" value="GO_Central"/>
</dbReference>
<dbReference type="GO" id="GO:0001968">
    <property type="term" value="F:fibronectin binding"/>
    <property type="evidence" value="ECO:0000318"/>
    <property type="project" value="GO_Central"/>
</dbReference>
<dbReference type="GO" id="GO:0005178">
    <property type="term" value="F:integrin binding"/>
    <property type="evidence" value="ECO:0000318"/>
    <property type="project" value="GO_Central"/>
</dbReference>
<dbReference type="GO" id="GO:0098640">
    <property type="term" value="F:integrin binding involved in cell-matrix adhesion"/>
    <property type="evidence" value="ECO:0000250"/>
    <property type="project" value="UniProtKB"/>
</dbReference>
<dbReference type="GO" id="GO:0046872">
    <property type="term" value="F:metal ion binding"/>
    <property type="evidence" value="ECO:0007669"/>
    <property type="project" value="UniProtKB-KW"/>
</dbReference>
<dbReference type="GO" id="GO:0046982">
    <property type="term" value="F:protein heterodimerization activity"/>
    <property type="evidence" value="ECO:0000250"/>
    <property type="project" value="UniProtKB"/>
</dbReference>
<dbReference type="GO" id="GO:0019901">
    <property type="term" value="F:protein kinase binding"/>
    <property type="evidence" value="ECO:0000318"/>
    <property type="project" value="GO_Central"/>
</dbReference>
<dbReference type="GO" id="GO:0033627">
    <property type="term" value="P:cell adhesion mediated by integrin"/>
    <property type="evidence" value="ECO:0000250"/>
    <property type="project" value="UniProtKB"/>
</dbReference>
<dbReference type="GO" id="GO:0016477">
    <property type="term" value="P:cell migration"/>
    <property type="evidence" value="ECO:0000318"/>
    <property type="project" value="GO_Central"/>
</dbReference>
<dbReference type="GO" id="GO:0098609">
    <property type="term" value="P:cell-cell adhesion"/>
    <property type="evidence" value="ECO:0000318"/>
    <property type="project" value="GO_Central"/>
</dbReference>
<dbReference type="GO" id="GO:0007160">
    <property type="term" value="P:cell-matrix adhesion"/>
    <property type="evidence" value="ECO:0000318"/>
    <property type="project" value="GO_Central"/>
</dbReference>
<dbReference type="GO" id="GO:0071404">
    <property type="term" value="P:cellular response to low-density lipoprotein particle stimulus"/>
    <property type="evidence" value="ECO:0000250"/>
    <property type="project" value="UniProtKB"/>
</dbReference>
<dbReference type="GO" id="GO:0007229">
    <property type="term" value="P:integrin-mediated signaling pathway"/>
    <property type="evidence" value="ECO:0000318"/>
    <property type="project" value="GO_Central"/>
</dbReference>
<dbReference type="GO" id="GO:0007517">
    <property type="term" value="P:muscle organ development"/>
    <property type="evidence" value="ECO:0007669"/>
    <property type="project" value="UniProtKB-KW"/>
</dbReference>
<dbReference type="GO" id="GO:0045445">
    <property type="term" value="P:myoblast differentiation"/>
    <property type="evidence" value="ECO:0000250"/>
    <property type="project" value="UniProtKB"/>
</dbReference>
<dbReference type="GO" id="GO:0007520">
    <property type="term" value="P:myoblast fusion"/>
    <property type="evidence" value="ECO:0000250"/>
    <property type="project" value="UniProtKB"/>
</dbReference>
<dbReference type="GO" id="GO:0045906">
    <property type="term" value="P:negative regulation of vasoconstriction"/>
    <property type="evidence" value="ECO:0000250"/>
    <property type="project" value="UniProtKB"/>
</dbReference>
<dbReference type="GO" id="GO:0030335">
    <property type="term" value="P:positive regulation of cell migration"/>
    <property type="evidence" value="ECO:0000250"/>
    <property type="project" value="UniProtKB"/>
</dbReference>
<dbReference type="GO" id="GO:1903078">
    <property type="term" value="P:positive regulation of protein localization to plasma membrane"/>
    <property type="evidence" value="ECO:0000250"/>
    <property type="project" value="UniProtKB"/>
</dbReference>
<dbReference type="GO" id="GO:0031623">
    <property type="term" value="P:receptor internalization"/>
    <property type="evidence" value="ECO:0000250"/>
    <property type="project" value="UniProtKB"/>
</dbReference>
<dbReference type="GO" id="GO:0010710">
    <property type="term" value="P:regulation of collagen catabolic process"/>
    <property type="evidence" value="ECO:0000250"/>
    <property type="project" value="UniProtKB"/>
</dbReference>
<dbReference type="FunFam" id="1.20.5.100:FF:000002">
    <property type="entry name" value="Integrin beta"/>
    <property type="match status" value="1"/>
</dbReference>
<dbReference type="FunFam" id="2.10.25.10:FF:000043">
    <property type="entry name" value="Integrin beta"/>
    <property type="match status" value="1"/>
</dbReference>
<dbReference type="FunFam" id="2.10.25.10:FF:000075">
    <property type="entry name" value="Integrin beta"/>
    <property type="match status" value="1"/>
</dbReference>
<dbReference type="FunFam" id="2.10.25.10:FF:000155">
    <property type="entry name" value="Integrin beta"/>
    <property type="match status" value="1"/>
</dbReference>
<dbReference type="FunFam" id="2.60.40.1510:FF:000003">
    <property type="entry name" value="Integrin beta"/>
    <property type="match status" value="1"/>
</dbReference>
<dbReference type="FunFam" id="3.30.1680.10:FF:000005">
    <property type="entry name" value="Integrin beta"/>
    <property type="match status" value="1"/>
</dbReference>
<dbReference type="FunFam" id="3.40.50.410:FF:000002">
    <property type="entry name" value="Integrin beta"/>
    <property type="match status" value="1"/>
</dbReference>
<dbReference type="FunFam" id="4.10.1240.30:FF:000002">
    <property type="entry name" value="Integrin beta"/>
    <property type="match status" value="1"/>
</dbReference>
<dbReference type="Gene3D" id="4.10.1240.30">
    <property type="match status" value="1"/>
</dbReference>
<dbReference type="Gene3D" id="1.20.5.100">
    <property type="entry name" value="Cytochrome c1, transmembrane anchor, C-terminal"/>
    <property type="match status" value="1"/>
</dbReference>
<dbReference type="Gene3D" id="2.10.25.10">
    <property type="entry name" value="Laminin"/>
    <property type="match status" value="4"/>
</dbReference>
<dbReference type="Gene3D" id="3.30.1680.10">
    <property type="entry name" value="ligand-binding face of the semaphorins, domain 2"/>
    <property type="match status" value="1"/>
</dbReference>
<dbReference type="Gene3D" id="2.60.40.1510">
    <property type="entry name" value="ntegrin, alpha v. Chain A, domain 3"/>
    <property type="match status" value="1"/>
</dbReference>
<dbReference type="Gene3D" id="3.40.50.410">
    <property type="entry name" value="von Willebrand factor, type A domain"/>
    <property type="match status" value="1"/>
</dbReference>
<dbReference type="InterPro" id="IPR013111">
    <property type="entry name" value="EGF_extracell"/>
</dbReference>
<dbReference type="InterPro" id="IPR040622">
    <property type="entry name" value="I-EGF_1"/>
</dbReference>
<dbReference type="InterPro" id="IPR033760">
    <property type="entry name" value="Integrin_beta_N"/>
</dbReference>
<dbReference type="InterPro" id="IPR015812">
    <property type="entry name" value="Integrin_bsu"/>
</dbReference>
<dbReference type="InterPro" id="IPR014836">
    <property type="entry name" value="Integrin_bsu_cyt_dom"/>
</dbReference>
<dbReference type="InterPro" id="IPR012896">
    <property type="entry name" value="Integrin_bsu_tail"/>
</dbReference>
<dbReference type="InterPro" id="IPR036349">
    <property type="entry name" value="Integrin_bsu_tail_dom_sf"/>
</dbReference>
<dbReference type="InterPro" id="IPR002369">
    <property type="entry name" value="Integrin_bsu_VWA"/>
</dbReference>
<dbReference type="InterPro" id="IPR032695">
    <property type="entry name" value="Integrin_dom_sf"/>
</dbReference>
<dbReference type="InterPro" id="IPR016201">
    <property type="entry name" value="PSI"/>
</dbReference>
<dbReference type="InterPro" id="IPR036465">
    <property type="entry name" value="vWFA_dom_sf"/>
</dbReference>
<dbReference type="PANTHER" id="PTHR10082">
    <property type="entry name" value="INTEGRIN BETA SUBUNIT"/>
    <property type="match status" value="1"/>
</dbReference>
<dbReference type="PANTHER" id="PTHR10082:SF28">
    <property type="entry name" value="INTEGRIN BETA-1"/>
    <property type="match status" value="1"/>
</dbReference>
<dbReference type="Pfam" id="PF07974">
    <property type="entry name" value="EGF_2"/>
    <property type="match status" value="1"/>
</dbReference>
<dbReference type="Pfam" id="PF23105">
    <property type="entry name" value="EGF_integrin"/>
    <property type="match status" value="1"/>
</dbReference>
<dbReference type="Pfam" id="PF18372">
    <property type="entry name" value="I-EGF_1"/>
    <property type="match status" value="1"/>
</dbReference>
<dbReference type="Pfam" id="PF08725">
    <property type="entry name" value="Integrin_b_cyt"/>
    <property type="match status" value="1"/>
</dbReference>
<dbReference type="Pfam" id="PF07965">
    <property type="entry name" value="Integrin_B_tail"/>
    <property type="match status" value="1"/>
</dbReference>
<dbReference type="Pfam" id="PF00362">
    <property type="entry name" value="Integrin_beta"/>
    <property type="match status" value="1"/>
</dbReference>
<dbReference type="Pfam" id="PF17205">
    <property type="entry name" value="PSI_integrin"/>
    <property type="match status" value="1"/>
</dbReference>
<dbReference type="PIRSF" id="PIRSF002512">
    <property type="entry name" value="Integrin_B"/>
    <property type="match status" value="1"/>
</dbReference>
<dbReference type="PRINTS" id="PR01186">
    <property type="entry name" value="INTEGRINB"/>
</dbReference>
<dbReference type="SMART" id="SM00187">
    <property type="entry name" value="INB"/>
    <property type="match status" value="1"/>
</dbReference>
<dbReference type="SMART" id="SM01241">
    <property type="entry name" value="Integrin_b_cyt"/>
    <property type="match status" value="1"/>
</dbReference>
<dbReference type="SMART" id="SM01242">
    <property type="entry name" value="Integrin_B_tail"/>
    <property type="match status" value="1"/>
</dbReference>
<dbReference type="SMART" id="SM00423">
    <property type="entry name" value="PSI"/>
    <property type="match status" value="1"/>
</dbReference>
<dbReference type="SUPFAM" id="SSF57196">
    <property type="entry name" value="EGF/Laminin"/>
    <property type="match status" value="2"/>
</dbReference>
<dbReference type="SUPFAM" id="SSF69687">
    <property type="entry name" value="Integrin beta tail domain"/>
    <property type="match status" value="1"/>
</dbReference>
<dbReference type="SUPFAM" id="SSF69179">
    <property type="entry name" value="Integrin domains"/>
    <property type="match status" value="1"/>
</dbReference>
<dbReference type="SUPFAM" id="SSF103575">
    <property type="entry name" value="Plexin repeat"/>
    <property type="match status" value="1"/>
</dbReference>
<dbReference type="SUPFAM" id="SSF53300">
    <property type="entry name" value="vWA-like"/>
    <property type="match status" value="1"/>
</dbReference>
<dbReference type="PROSITE" id="PS00022">
    <property type="entry name" value="EGF_1"/>
    <property type="match status" value="2"/>
</dbReference>
<dbReference type="PROSITE" id="PS00243">
    <property type="entry name" value="I_EGF_1"/>
    <property type="match status" value="3"/>
</dbReference>
<dbReference type="PROSITE" id="PS52047">
    <property type="entry name" value="I_EGF_2"/>
    <property type="match status" value="4"/>
</dbReference>
<comment type="function">
    <text evidence="3 4 5">Integrins alpha-1/beta-1, alpha-2/beta-1, alpha-10/beta-1 and alpha-11/beta-1 are receptors for collagen. Integrins alpha-1/beta-1 and alpha-2/beta-2 recognize the proline-hydroxylated sequence G-F-P-G-E-R in collagen. Integrins alpha-2/beta-1, alpha-3/beta-1, alpha-4/beta-1, alpha-5/beta-1, alpha-8/beta-1, alpha-10/beta-1, alpha-11/beta-1 and alpha-V/beta-1 are receptors for fibronectin. Alpha-4/beta-1 recognizes one or more domains within the alternatively spliced CS-1 and CS-5 regions of fibronectin. Integrin alpha-5/beta-1 is a receptor for fibrinogen. Integrin alpha-1/beta-1, alpha-2/beta-1, alpha-6/beta-1 and alpha-7/beta-1 are receptors for lamimin. Integrin alpha-6/beta-1 (ITGA6:ITGB1) is present in oocytes and is involved in sperm-egg fusion. Integrin alpha-4/beta-1 is a receptor for VCAM1 and recognizes the sequence Q-I-D-S in VCAM1. Integrin alpha-9/beta-1 is a receptor for VCAM1, cytotactin and osteopontin. It recognizes the sequence A-E-I-D-G-I-E-L in cytotactin. Integrin alpha-3/beta-1 is a receptor for epiligrin, thrombospondin and CSPG4. Integrin alpha-3/beta-1 provides a docking site for FAP (seprase) at invadopodia plasma membranes in a collagen-dependent manner and hence may participate in the adhesion, formation of invadopodia and matrix degradation processes, promoting cell invasion. Alpha-3/beta-1 may mediate with LGALS3 the stimulation by CSPG4 of endothelial cells migration. Integrin alpha-V/beta-1 is a receptor for vitronectin. Beta-1 integrins recognize the sequence R-G-D in a wide array of ligands. When associated with alpha-7/beta-1 integrin, regulates cell adhesion and laminin matrix deposition. Involved in promoting endothelial cell motility and angiogenesis. Involved in osteoblast compaction through the fibronectin fibrillogenesis cell-mediated matrix assembly process and the formation of mineralized bone nodules. May be involved in up-regulation of the activity of kinases such as PKC via binding to KRT1. Together with KRT1 and RACK1, serves as a platform for SRC activation or inactivation. Plays a mechanistic adhesive role during telophase, required for the successful completion of cytokinesis (By similarity). ITGA4:ITGB1 binds to fractalkine (CX3CL1) and may act as its coreceptor in CX3CR1-dependent fractalkine signaling. ITGA4:ITGB1 and ITGA5:ITGB1 bind to PLA2G2A via a site (site 2) which is distinct from the classical ligand-binding site (site 1) and this induces integrin conformational changes and enhanced ligand binding to site 1. ITGA5:ITGB1 acts as a receptor for fibrillin-1 (FBN1) and mediates R-G-D-dependent cell adhesion to FBN1. ITGA5:ITGB1 acts as a receptor for fibronectin FN1 and mediates R-G-D-dependent cell adhesion to FN1 (By similarity). ITGA5:ITGB1 is a receptor for IL1B and binding is essential for IL1B signaling (By similarity). ITGA5:ITGB3 is a receptor for soluble CD40LG and is required for CD40/CD40LG signaling (By similarity). Plays an important role in myoblast differentiation and fusion during skeletal myogenesis (By similarity). ITGA9:ITGB1 may play a crucial role in SVEP1/polydom-mediated myoblast cell adhesion (By similarity). Integrins ITGA9:ITGB1 and ITGA4:ITGB1 repress PRKCA-mediated L-type voltage-gated channel Ca(2+) influx and ROCK-mediated calcium sensitivity in vascular smooth muscle cells via their interaction with SVEP1, thereby inhibit vasocontraction (By similarity).</text>
</comment>
<comment type="subunit">
    <text evidence="3 4 5">Interacts with seprase FAP (seprase); the interaction occurs at the cell surface of invadopodia membrane in a collagen-dependent manner (By similarity). Heterodimer of an alpha and a beta subunit. Beta-1 associates with either alpha-1, alpha-2, alpha-3, alpha-4, alpha-5, alpha-6, alpha-7, alpha-8, alpha-9, alpha-10, alpha-11 or alpha-V. ITGA6:ITGB1 is found in a complex with CD9; interaction takes place in oocytes and is involved in sperm-egg fusion. Binds LGALS3BP and NMRK2, when associated with alpha-7, but not with alpha-5. Interacts with FLNA, FLNB, FLNC and RANBP9. Interacts with KRT1 in the presence of RACK1 and SRC. Interacts with JAML; integrin alpha-4/beta-1 may regulate leukocyte to endothelial cells adhesion by controlling JAML homodimerization. Interacts with RAB21. Interacts (via the cytoplasmic region) with RAB25 (via the hypervariable C-terminal region). Interacts with MYO10. Interacts with ITGB1BP1 (via C-terminal region); the interaction is a prerequisite for focal adhesion disassembly. Interacts with TLN1; the interaction is prevented by competitive binding of ITGB1BP1. Interacts with ACAP1; required for ITGB1 recycling. Interacts with ASAP3. Interacts with FERMT2; the interaction is inhibited in presence of ITGB1BP1. Interacts with DAB2. Interacts with FGR and HCK. Interacts with alpha-7A and alpha-7B in adult skeletal muscle. Interacts with alpha-7B in cardiomyocytes of adult heart. Interacts with EMP2; the interaction may be direct or indirect and ITGB1 has a heterodimer form (By similarity). ITGA5:ITGB1 interacts with CCN3 (By similarity). ITGA4:ITGB1 is found in a ternary complex with CX3CR1 and CX3CL1 (By similarity). ITGA5:ITGB1 interacts with FBN1 (By similarity). ITGA5:ITGB1 interacts with IL1B. Interacts with MDK. ITGA4:ITGB1 interacts with MDK; this interaction mediates MDK-induced osteoblast cells migration through PXN phosphorylation. ITGA6:ITGB1 interacts with MDK; this interaction mediates MDK-induced neurite-outgrowth (By similarity). ITGA5:ITGB1 interacts with ACE2 (By similarity). Interacts with TMEM182 and LAMB1 (By similarity). Interacts with tensin TNS3; TNS3 also interacts with PEAK1, thus acting as an adapter molecule to bridge the association of PEAK1 with ITGB1 (By similarity). Interacts with tensin TNS4; the interaction displaces tensin TNS3 from the ITGB1 cytoplasmic tail and promotes ITGB1 stability (By similarity). Integrin ITGA9:ITGB1 interacts with SPP1/OPN (via N-terminus) (By similarity). Integrin ITGA9:ITGB1 interacts with TNC/TNFN3 (via the 3rd Fibronectin type-III domain) (By similarity). Integrins ITGA4:ITGB1 and ITGA9:ITGB1 interact with SVEP1 (via Sushi domain 21); thereby inhibit Ca(2+) intracellular signaling and as a result repress vasocontraction (By similarity). ITGA4:ITGB1 and ITGA5:ITGB1 interacts with SELP (By similarity). Interacts with CD248 (By similarity). ITGA5:ITGB1 interacts with IGFBP1 (By similarity). ITGA4:ITGB1 interacts with BCAM (By similarity). Interacts with ADGRG6 (By similarity).</text>
</comment>
<comment type="subcellular location">
    <subcellularLocation>
        <location evidence="3">Cell membrane</location>
        <topology evidence="6">Single-pass type I membrane protein</topology>
    </subcellularLocation>
    <subcellularLocation>
        <location evidence="3">Cell projection</location>
        <location evidence="3">Invadopodium membrane</location>
        <topology evidence="6">Single-pass type I membrane protein</topology>
    </subcellularLocation>
    <subcellularLocation>
        <location evidence="3">Cell projection</location>
        <location evidence="3">Ruffle membrane</location>
        <topology evidence="6">Single-pass type I membrane protein</topology>
    </subcellularLocation>
    <subcellularLocation>
        <location evidence="3">Recycling endosome</location>
    </subcellularLocation>
    <subcellularLocation>
        <location evidence="3">Melanosome</location>
    </subcellularLocation>
    <subcellularLocation>
        <location evidence="3">Cell projection</location>
        <location evidence="3">Lamellipodium</location>
    </subcellularLocation>
    <subcellularLocation>
        <location evidence="3">Cell projection</location>
        <location evidence="3">Ruffle</location>
    </subcellularLocation>
    <subcellularLocation>
        <location evidence="3">Cell junction</location>
        <location evidence="3">Focal adhesion</location>
    </subcellularLocation>
    <text evidence="3">Enriched preferentially at invadopodia, cell membrane protrusions that correspond to sites of cell invasion, in a collagen-dependent manner. Localized at plasma and ruffle membranes in a collagen-independent manner. Colocalizes with ITGB1BP1 and metastatic suppressor protein NME2 at the edge or peripheral ruffles and lamellipodia during the early stages of cell spreading on fibronectin or collagen. Translocates from peripheral focal adhesions to fibrillar adhesions in an ITGB1BP1-dependent manner.</text>
</comment>
<comment type="tissue specificity">
    <text evidence="9">Expressed in the spleen, thymus, alveolar macrophages, bone marrow, liver and kidney.</text>
</comment>
<comment type="domain">
    <text evidence="3">The VWFA domain (or beta I domain) contains three cation-binding sites: the ligand-associated metal ion-binding site (LIMBS or SyMBS), the metal ion-dependent adhesion site (MIDAS), and the adjacent MIDAS site (ADMIDAS). This domain is also part of the ligand-binding site.</text>
</comment>
<comment type="similarity">
    <text evidence="10">Belongs to the integrin beta chain family.</text>
</comment>
<keyword id="KW-0007">Acetylation</keyword>
<keyword id="KW-0106">Calcium</keyword>
<keyword id="KW-0130">Cell adhesion</keyword>
<keyword id="KW-0965">Cell junction</keyword>
<keyword id="KW-1003">Cell membrane</keyword>
<keyword id="KW-0966">Cell projection</keyword>
<keyword id="KW-1015">Disulfide bond</keyword>
<keyword id="KW-0245">EGF-like domain</keyword>
<keyword id="KW-0967">Endosome</keyword>
<keyword id="KW-0325">Glycoprotein</keyword>
<keyword id="KW-0401">Integrin</keyword>
<keyword id="KW-1017">Isopeptide bond</keyword>
<keyword id="KW-0460">Magnesium</keyword>
<keyword id="KW-0472">Membrane</keyword>
<keyword id="KW-0479">Metal-binding</keyword>
<keyword id="KW-0517">Myogenesis</keyword>
<keyword id="KW-0597">Phosphoprotein</keyword>
<keyword id="KW-0675">Receptor</keyword>
<keyword id="KW-1185">Reference proteome</keyword>
<keyword id="KW-0677">Repeat</keyword>
<keyword id="KW-0732">Signal</keyword>
<keyword id="KW-0812">Transmembrane</keyword>
<keyword id="KW-1133">Transmembrane helix</keyword>
<keyword id="KW-0832">Ubl conjugation</keyword>
<protein>
    <recommendedName>
        <fullName>Integrin beta-1</fullName>
    </recommendedName>
    <alternativeName>
        <fullName>Fibronectin receptor subunit beta</fullName>
    </alternativeName>
    <alternativeName>
        <fullName>VLA-4 subunit beta</fullName>
    </alternativeName>
    <cdAntigenName>CD29</cdAntigenName>
</protein>
<proteinExistence type="evidence at transcript level"/>
<organism>
    <name type="scientific">Sus scrofa</name>
    <name type="common">Pig</name>
    <dbReference type="NCBI Taxonomy" id="9823"/>
    <lineage>
        <taxon>Eukaryota</taxon>
        <taxon>Metazoa</taxon>
        <taxon>Chordata</taxon>
        <taxon>Craniata</taxon>
        <taxon>Vertebrata</taxon>
        <taxon>Euteleostomi</taxon>
        <taxon>Mammalia</taxon>
        <taxon>Eutheria</taxon>
        <taxon>Laurasiatheria</taxon>
        <taxon>Artiodactyla</taxon>
        <taxon>Suina</taxon>
        <taxon>Suidae</taxon>
        <taxon>Sus</taxon>
    </lineage>
</organism>
<evidence type="ECO:0000250" key="1"/>
<evidence type="ECO:0000250" key="2">
    <source>
        <dbReference type="UniProtKB" id="P05106"/>
    </source>
</evidence>
<evidence type="ECO:0000250" key="3">
    <source>
        <dbReference type="UniProtKB" id="P05556"/>
    </source>
</evidence>
<evidence type="ECO:0000250" key="4">
    <source>
        <dbReference type="UniProtKB" id="P07228"/>
    </source>
</evidence>
<evidence type="ECO:0000250" key="5">
    <source>
        <dbReference type="UniProtKB" id="P09055"/>
    </source>
</evidence>
<evidence type="ECO:0000255" key="6"/>
<evidence type="ECO:0000255" key="7">
    <source>
        <dbReference type="PROSITE-ProRule" id="PRU01392"/>
    </source>
</evidence>
<evidence type="ECO:0000256" key="8">
    <source>
        <dbReference type="SAM" id="MobiDB-lite"/>
    </source>
</evidence>
<evidence type="ECO:0000269" key="9">
    <source>
    </source>
</evidence>
<evidence type="ECO:0000305" key="10"/>
<gene>
    <name type="primary">ITGB1</name>
</gene>
<sequence length="798" mass="88266">MNLQLIFWIGLISSVCYVFGQADENRCLKANAKSCGECIQAGPNCGWCTNSTFLQEGMPTSARCDDLEALRKKGCHPDDIENPRGSKNIKKNKNVTNRSKGTAEKLQPEDITQIQPQQLVLQLRSGEPQTFTLKFKRAEDYPIDLYYLMDLSYSMKDDLENVKSLGTDLMNEMRRITSDFRIGFGSFVEKTVMPYISTTPAKLRNPCTSEQNCTSPFSYKNVLSLTDKGEVFNELVGKQRISGNLDSPEGGFDAIMQVAVCGSLIGWRNVTRLLVFSTDAGFHFAGDGKLGGIVLPNDGHCHLENDVYTMSHYYDYPSIAHLVQKLSENNIQTIFAVTEEFQPVYKELKNLIPKSAVGTLSANSSNVIQLIIDAYNSLSSEVILENSKLPEGVTINYKSYCKNGVNGTGENGRKCSNISIGDEVQFEISITANKCPNKNSETIKIKPLGFTEEVEIILQFICECECQSEGIPSSPKCHDGNGTFECGACRCNEGRVGRHCECSTDEVNSEDMDAYCRKENSSEICTNNGECVCGQCVCRKRDNTNEIYSGKFCECDNFNCDRSNGLICGGNGVCKCRVCECNPNYTGSACDCSLDTTSCMAVNGQICNGRGVCECGVCKCTDPKFQGPTCEMCQTCLGVCAEHKECVQCRAFNKGEKKDTCAQECSHFNITKVENRDKLPQPGQVDPLSHCKEKDVDDCWFYFTYSVNGNNEATVHVVETPECPTGPDIIPIVAGVVAGIVLIGLALLLIWKLLMIIHDRREFAKFEKEKMNAKWDTGENPIYKSAVTTVVNPKYEGK</sequence>
<accession>Q9GLP0</accession>
<feature type="signal peptide" evidence="6">
    <location>
        <begin position="1"/>
        <end position="20"/>
    </location>
</feature>
<feature type="chain" id="PRO_0000239427" description="Integrin beta-1">
    <location>
        <begin position="21"/>
        <end position="798"/>
    </location>
</feature>
<feature type="topological domain" description="Extracellular" evidence="6">
    <location>
        <begin position="21"/>
        <end position="728"/>
    </location>
</feature>
<feature type="transmembrane region" description="Helical" evidence="6">
    <location>
        <begin position="729"/>
        <end position="749"/>
    </location>
</feature>
<feature type="topological domain" description="Cytoplasmic" evidence="6">
    <location>
        <begin position="750"/>
        <end position="798"/>
    </location>
</feature>
<feature type="domain" description="PSI" evidence="6">
    <location>
        <begin position="26"/>
        <end position="76"/>
    </location>
</feature>
<feature type="domain" description="VWFA" evidence="2">
    <location>
        <begin position="140"/>
        <end position="378"/>
    </location>
</feature>
<feature type="domain" description="I-EGF 1" evidence="7">
    <location>
        <begin position="466"/>
        <end position="501"/>
    </location>
</feature>
<feature type="domain" description="I-EGF 2" evidence="7">
    <location>
        <begin position="502"/>
        <end position="554"/>
    </location>
</feature>
<feature type="domain" description="I-EGF 3" evidence="7">
    <location>
        <begin position="555"/>
        <end position="591"/>
    </location>
</feature>
<feature type="domain" description="I-EGF 4" evidence="7">
    <location>
        <begin position="592"/>
        <end position="631"/>
    </location>
</feature>
<feature type="region of interest" description="Disordered" evidence="8">
    <location>
        <begin position="75"/>
        <end position="107"/>
    </location>
</feature>
<feature type="region of interest" description="CX3CL1-binding" evidence="3">
    <location>
        <begin position="207"/>
        <end position="213"/>
    </location>
</feature>
<feature type="region of interest" description="CX3CL1-binding" evidence="3">
    <location>
        <begin position="295"/>
        <end position="314"/>
    </location>
</feature>
<feature type="region of interest" description="Interaction with TMEM182" evidence="4">
    <location>
        <begin position="383"/>
        <end position="465"/>
    </location>
</feature>
<feature type="region of interest" description="Signal for sorting from recycling endosomes; interaction with ACAP1" evidence="1">
    <location>
        <begin position="762"/>
        <end position="767"/>
    </location>
</feature>
<feature type="region of interest" description="Interaction with ITGB1BP1" evidence="1">
    <location>
        <begin position="785"/>
        <end position="792"/>
    </location>
</feature>
<feature type="compositionally biased region" description="Basic and acidic residues" evidence="8">
    <location>
        <begin position="75"/>
        <end position="84"/>
    </location>
</feature>
<feature type="binding site" description="in MIDAS binding site" evidence="3">
    <location>
        <position position="152"/>
    </location>
    <ligand>
        <name>Mg(2+)</name>
        <dbReference type="ChEBI" id="CHEBI:18420"/>
    </ligand>
</feature>
<feature type="binding site" description="in ADMIDAS binding site" evidence="3">
    <location>
        <position position="154"/>
    </location>
    <ligand>
        <name>Ca(2+)</name>
        <dbReference type="ChEBI" id="CHEBI:29108"/>
        <label>1</label>
    </ligand>
</feature>
<feature type="binding site" description="in MIDAS binding site" evidence="3">
    <location>
        <position position="154"/>
    </location>
    <ligand>
        <name>Mg(2+)</name>
        <dbReference type="ChEBI" id="CHEBI:18420"/>
    </ligand>
</feature>
<feature type="binding site" description="in ADMIDAS binding site" evidence="3">
    <location>
        <position position="157"/>
    </location>
    <ligand>
        <name>Ca(2+)</name>
        <dbReference type="ChEBI" id="CHEBI:29108"/>
        <label>1</label>
    </ligand>
</feature>
<feature type="binding site" description="in ADMIDAS binding site" evidence="3">
    <location>
        <position position="158"/>
    </location>
    <ligand>
        <name>Ca(2+)</name>
        <dbReference type="ChEBI" id="CHEBI:29108"/>
        <label>1</label>
    </ligand>
</feature>
<feature type="binding site" description="in LIMBS binding site" evidence="3">
    <location>
        <position position="189"/>
    </location>
    <ligand>
        <name>Ca(2+)</name>
        <dbReference type="ChEBI" id="CHEBI:29108"/>
        <label>2</label>
    </ligand>
</feature>
<feature type="binding site" description="in LIMBS binding site" evidence="3">
    <location>
        <position position="244"/>
    </location>
    <ligand>
        <name>Ca(2+)</name>
        <dbReference type="ChEBI" id="CHEBI:29108"/>
        <label>2</label>
    </ligand>
</feature>
<feature type="binding site" description="in LIMBS binding site" evidence="3">
    <location>
        <position position="246"/>
    </location>
    <ligand>
        <name>Ca(2+)</name>
        <dbReference type="ChEBI" id="CHEBI:29108"/>
        <label>2</label>
    </ligand>
</feature>
<feature type="binding site" description="in LIMBS binding site" evidence="3">
    <location>
        <position position="248"/>
    </location>
    <ligand>
        <name>Ca(2+)</name>
        <dbReference type="ChEBI" id="CHEBI:29108"/>
        <label>2</label>
    </ligand>
</feature>
<feature type="binding site" description="in LIMBS binding site" evidence="3">
    <location>
        <position position="249"/>
    </location>
    <ligand>
        <name>Ca(2+)</name>
        <dbReference type="ChEBI" id="CHEBI:29108"/>
        <label>2</label>
    </ligand>
</feature>
<feature type="binding site" description="in MIDAS binding site" evidence="3">
    <location>
        <position position="249"/>
    </location>
    <ligand>
        <name>Mg(2+)</name>
        <dbReference type="ChEBI" id="CHEBI:18420"/>
    </ligand>
</feature>
<feature type="binding site" description="in ADMIDAS binding site" evidence="3">
    <location>
        <position position="362"/>
    </location>
    <ligand>
        <name>Ca(2+)</name>
        <dbReference type="ChEBI" id="CHEBI:29108"/>
        <label>1</label>
    </ligand>
</feature>
<feature type="modified residue" description="Phosphothreonine" evidence="3">
    <location>
        <position position="777"/>
    </location>
</feature>
<feature type="modified residue" description="Phosphotyrosine" evidence="3">
    <location>
        <position position="783"/>
    </location>
</feature>
<feature type="modified residue" description="Phosphoserine" evidence="3">
    <location>
        <position position="785"/>
    </location>
</feature>
<feature type="modified residue" description="Phosphothreonine" evidence="3">
    <location>
        <position position="789"/>
    </location>
</feature>
<feature type="modified residue" description="N6-acetyllysine; alternate" evidence="3">
    <location>
        <position position="794"/>
    </location>
</feature>
<feature type="glycosylation site" description="N-linked (GlcNAc...) asparagine" evidence="6">
    <location>
        <position position="50"/>
    </location>
</feature>
<feature type="glycosylation site" description="N-linked (GlcNAc...) asparagine" evidence="6">
    <location>
        <position position="94"/>
    </location>
</feature>
<feature type="glycosylation site" description="N-linked (GlcNAc...) asparagine" evidence="6">
    <location>
        <position position="97"/>
    </location>
</feature>
<feature type="glycosylation site" description="N-linked (GlcNAc...) asparagine" evidence="6">
    <location>
        <position position="212"/>
    </location>
</feature>
<feature type="glycosylation site" description="N-linked (GlcNAc...) asparagine" evidence="6">
    <location>
        <position position="269"/>
    </location>
</feature>
<feature type="glycosylation site" description="N-linked (GlcNAc...) asparagine" evidence="6">
    <location>
        <position position="363"/>
    </location>
</feature>
<feature type="glycosylation site" description="N-linked (GlcNAc...) asparagine" evidence="6">
    <location>
        <position position="406"/>
    </location>
</feature>
<feature type="glycosylation site" description="N-linked (GlcNAc...) asparagine" evidence="6">
    <location>
        <position position="417"/>
    </location>
</feature>
<feature type="glycosylation site" description="N-linked (GlcNAc...) asparagine" evidence="6">
    <location>
        <position position="481"/>
    </location>
</feature>
<feature type="glycosylation site" description="N-linked (GlcNAc...) asparagine" evidence="6">
    <location>
        <position position="520"/>
    </location>
</feature>
<feature type="glycosylation site" description="N-linked (GlcNAc...) asparagine" evidence="6">
    <location>
        <position position="584"/>
    </location>
</feature>
<feature type="glycosylation site" description="N-linked (GlcNAc...) asparagine" evidence="6">
    <location>
        <position position="669"/>
    </location>
</feature>
<feature type="disulfide bond" evidence="3">
    <location>
        <begin position="27"/>
        <end position="45"/>
    </location>
</feature>
<feature type="disulfide bond" evidence="3">
    <location>
        <begin position="35"/>
        <end position="464"/>
    </location>
</feature>
<feature type="disulfide bond" evidence="3">
    <location>
        <begin position="38"/>
        <end position="64"/>
    </location>
</feature>
<feature type="disulfide bond" evidence="3">
    <location>
        <begin position="48"/>
        <end position="75"/>
    </location>
</feature>
<feature type="disulfide bond" evidence="3">
    <location>
        <begin position="207"/>
        <end position="213"/>
    </location>
</feature>
<feature type="disulfide bond" evidence="3">
    <location>
        <begin position="261"/>
        <end position="301"/>
    </location>
</feature>
<feature type="disulfide bond" evidence="3">
    <location>
        <begin position="401"/>
        <end position="415"/>
    </location>
</feature>
<feature type="disulfide bond" evidence="3">
    <location>
        <begin position="435"/>
        <end position="462"/>
    </location>
</feature>
<feature type="disulfide bond" evidence="7">
    <location>
        <begin position="466"/>
        <end position="486"/>
    </location>
</feature>
<feature type="disulfide bond" evidence="7">
    <location>
        <begin position="477"/>
        <end position="489"/>
    </location>
</feature>
<feature type="disulfide bond" evidence="7">
    <location>
        <begin position="491"/>
        <end position="500"/>
    </location>
</feature>
<feature type="disulfide bond" evidence="7">
    <location>
        <begin position="502"/>
        <end position="533"/>
    </location>
</feature>
<feature type="disulfide bond" evidence="7">
    <location>
        <begin position="516"/>
        <end position="531"/>
    </location>
</feature>
<feature type="disulfide bond" evidence="7">
    <location>
        <begin position="525"/>
        <end position="536"/>
    </location>
</feature>
<feature type="disulfide bond" evidence="7">
    <location>
        <begin position="538"/>
        <end position="553"/>
    </location>
</feature>
<feature type="disulfide bond" evidence="7">
    <location>
        <begin position="555"/>
        <end position="576"/>
    </location>
</feature>
<feature type="disulfide bond" evidence="7">
    <location>
        <begin position="560"/>
        <end position="574"/>
    </location>
</feature>
<feature type="disulfide bond" evidence="7">
    <location>
        <begin position="568"/>
        <end position="579"/>
    </location>
</feature>
<feature type="disulfide bond" evidence="7">
    <location>
        <begin position="581"/>
        <end position="590"/>
    </location>
</feature>
<feature type="disulfide bond" evidence="7">
    <location>
        <begin position="592"/>
        <end position="615"/>
    </location>
</feature>
<feature type="disulfide bond" evidence="7">
    <location>
        <begin position="599"/>
        <end position="613"/>
    </location>
</feature>
<feature type="disulfide bond" evidence="7">
    <location>
        <begin position="607"/>
        <end position="618"/>
    </location>
</feature>
<feature type="disulfide bond" evidence="7">
    <location>
        <begin position="620"/>
        <end position="630"/>
    </location>
</feature>
<feature type="disulfide bond" evidence="3">
    <location>
        <begin position="633"/>
        <end position="636"/>
    </location>
</feature>
<feature type="disulfide bond" evidence="3">
    <location>
        <begin position="640"/>
        <end position="691"/>
    </location>
</feature>
<feature type="disulfide bond" evidence="3">
    <location>
        <begin position="646"/>
        <end position="665"/>
    </location>
</feature>
<feature type="disulfide bond" evidence="3">
    <location>
        <begin position="649"/>
        <end position="661"/>
    </location>
</feature>
<feature type="disulfide bond" evidence="3">
    <location>
        <begin position="699"/>
        <end position="723"/>
    </location>
</feature>
<feature type="cross-link" description="Glycyl lysine isopeptide (Lys-Gly) (interchain with G-Cter in SUMO1); alternate" evidence="3">
    <location>
        <position position="794"/>
    </location>
</feature>